<accession>P0AC27</accession>
<accession>P11097</accession>
<accession>P78112</accession>
<protein>
    <recommendedName>
        <fullName>Nitrite transporter NirC</fullName>
    </recommendedName>
</protein>
<organism>
    <name type="scientific">Shigella flexneri</name>
    <dbReference type="NCBI Taxonomy" id="623"/>
    <lineage>
        <taxon>Bacteria</taxon>
        <taxon>Pseudomonadati</taxon>
        <taxon>Pseudomonadota</taxon>
        <taxon>Gammaproteobacteria</taxon>
        <taxon>Enterobacterales</taxon>
        <taxon>Enterobacteriaceae</taxon>
        <taxon>Shigella</taxon>
    </lineage>
</organism>
<name>NIRC_SHIFL</name>
<sequence>MFTDTINKCAANAARIARLSANNPLGFWVSSAMAGAYVGLGIILIFTLGNLLDPSVRPLVMGATFGIALTLVIIAGSELFTGHTMFLTFGVKAGSISHGQMWAILPQTWLGNLVGSVFVAMLYSWGGGSLLPVDTSIVHSVALAKTTAPAMVLFFKGALCNWLVCLAIWMALRTEGAAKFIAIWWCLLAFIASGYEHSIANMTLFALSWFGNHSEAYTLAGIGHNLLWVTLGNTLSGAVFMGLGYWYATPKANRPVADKFNQTETAAG</sequence>
<comment type="function">
    <text evidence="1">Catalyzes nitrite uptake and nitrite export across the cytoplasmic membrane.</text>
</comment>
<comment type="subcellular location">
    <subcellularLocation>
        <location evidence="1">Cell inner membrane</location>
        <topology evidence="1">Multi-pass membrane protein</topology>
    </subcellularLocation>
</comment>
<comment type="similarity">
    <text evidence="3">Belongs to the FNT transporter (TC 1.A.16) family.</text>
</comment>
<comment type="sequence caution" evidence="3">
    <conflict type="erroneous initiation">
        <sequence resource="EMBL-CDS" id="AAN44849"/>
    </conflict>
    <text>Truncated N-terminus.</text>
</comment>
<comment type="sequence caution" evidence="3">
    <conflict type="erroneous initiation">
        <sequence resource="EMBL-CDS" id="AAP19329"/>
    </conflict>
    <text>Truncated N-terminus.</text>
</comment>
<evidence type="ECO:0000250" key="1"/>
<evidence type="ECO:0000255" key="2"/>
<evidence type="ECO:0000305" key="3"/>
<feature type="chain" id="PRO_0000094726" description="Nitrite transporter NirC">
    <location>
        <begin position="1"/>
        <end position="268"/>
    </location>
</feature>
<feature type="topological domain" description="Cytoplasmic" evidence="2">
    <location>
        <begin position="1"/>
        <end position="29"/>
    </location>
</feature>
<feature type="transmembrane region" description="Helical" evidence="2">
    <location>
        <begin position="30"/>
        <end position="46"/>
    </location>
</feature>
<feature type="topological domain" description="Extracellular" evidence="2">
    <location>
        <begin position="47"/>
        <end position="58"/>
    </location>
</feature>
<feature type="transmembrane region" description="Helical" evidence="2">
    <location>
        <begin position="59"/>
        <end position="75"/>
    </location>
</feature>
<feature type="topological domain" description="Cytoplasmic" evidence="2">
    <location>
        <begin position="76"/>
        <end position="107"/>
    </location>
</feature>
<feature type="transmembrane region" description="Helical" evidence="2">
    <location>
        <begin position="108"/>
        <end position="125"/>
    </location>
</feature>
<feature type="topological domain" description="Extracellular" evidence="2">
    <location>
        <begin position="126"/>
        <end position="153"/>
    </location>
</feature>
<feature type="transmembrane region" description="Helical" evidence="2">
    <location>
        <begin position="154"/>
        <end position="172"/>
    </location>
</feature>
<feature type="topological domain" description="Cytoplasmic" evidence="2">
    <location>
        <begin position="173"/>
        <end position="179"/>
    </location>
</feature>
<feature type="transmembrane region" description="Helical" evidence="2">
    <location>
        <begin position="180"/>
        <end position="195"/>
    </location>
</feature>
<feature type="topological domain" description="Extracellular" evidence="2">
    <location>
        <begin position="196"/>
        <end position="230"/>
    </location>
</feature>
<feature type="transmembrane region" description="Helical" evidence="2">
    <location>
        <begin position="231"/>
        <end position="250"/>
    </location>
</feature>
<feature type="topological domain" description="Cytoplasmic" evidence="2">
    <location>
        <begin position="251"/>
        <end position="268"/>
    </location>
</feature>
<gene>
    <name type="primary">nirC</name>
    <name type="ordered locus">SF3386</name>
    <name type="ordered locus">S4377</name>
</gene>
<proteinExistence type="inferred from homology"/>
<dbReference type="EMBL" id="AE005674">
    <property type="protein sequence ID" value="AAN44849.2"/>
    <property type="status" value="ALT_INIT"/>
    <property type="molecule type" value="Genomic_DNA"/>
</dbReference>
<dbReference type="EMBL" id="AE014073">
    <property type="protein sequence ID" value="AAP19329.1"/>
    <property type="status" value="ALT_INIT"/>
    <property type="molecule type" value="Genomic_DNA"/>
</dbReference>
<dbReference type="RefSeq" id="WP_000493556.1">
    <property type="nucleotide sequence ID" value="NZ_WPGW01000003.1"/>
</dbReference>
<dbReference type="SMR" id="P0AC27"/>
<dbReference type="STRING" id="198214.SF3386"/>
<dbReference type="PaxDb" id="198214-SF3386"/>
<dbReference type="GeneID" id="75206311"/>
<dbReference type="KEGG" id="sfx:S4377"/>
<dbReference type="PATRIC" id="fig|623.156.peg.1849"/>
<dbReference type="HOGENOM" id="CLU_1466086_0_0_6"/>
<dbReference type="Proteomes" id="UP000001006">
    <property type="component" value="Chromosome"/>
</dbReference>
<dbReference type="Proteomes" id="UP000002673">
    <property type="component" value="Chromosome"/>
</dbReference>
<dbReference type="GO" id="GO:0005886">
    <property type="term" value="C:plasma membrane"/>
    <property type="evidence" value="ECO:0007669"/>
    <property type="project" value="UniProtKB-SubCell"/>
</dbReference>
<dbReference type="GO" id="GO:0015499">
    <property type="term" value="F:formate transmembrane transporter activity"/>
    <property type="evidence" value="ECO:0007669"/>
    <property type="project" value="TreeGrafter"/>
</dbReference>
<dbReference type="GO" id="GO:0042128">
    <property type="term" value="P:nitrate assimilation"/>
    <property type="evidence" value="ECO:0007669"/>
    <property type="project" value="UniProtKB-KW"/>
</dbReference>
<dbReference type="FunFam" id="1.20.1080.10:FF:000008">
    <property type="entry name" value="Nitrite transporter NirC"/>
    <property type="match status" value="1"/>
</dbReference>
<dbReference type="Gene3D" id="1.20.1080.10">
    <property type="entry name" value="Glycerol uptake facilitator protein"/>
    <property type="match status" value="1"/>
</dbReference>
<dbReference type="InterPro" id="IPR023271">
    <property type="entry name" value="Aquaporin-like"/>
</dbReference>
<dbReference type="InterPro" id="IPR000292">
    <property type="entry name" value="For/NO2_transpt"/>
</dbReference>
<dbReference type="InterPro" id="IPR024002">
    <property type="entry name" value="For/NO2_transpt_CS"/>
</dbReference>
<dbReference type="NCBIfam" id="TIGR00790">
    <property type="entry name" value="fnt"/>
    <property type="match status" value="1"/>
</dbReference>
<dbReference type="NCBIfam" id="NF008595">
    <property type="entry name" value="PRK11562.1"/>
    <property type="match status" value="1"/>
</dbReference>
<dbReference type="PANTHER" id="PTHR30520">
    <property type="entry name" value="FORMATE TRANSPORTER-RELATED"/>
    <property type="match status" value="1"/>
</dbReference>
<dbReference type="PANTHER" id="PTHR30520:SF8">
    <property type="entry name" value="NITRITE TRANSPORTER NIRC"/>
    <property type="match status" value="1"/>
</dbReference>
<dbReference type="Pfam" id="PF01226">
    <property type="entry name" value="Form_Nir_trans"/>
    <property type="match status" value="1"/>
</dbReference>
<dbReference type="PROSITE" id="PS01005">
    <property type="entry name" value="FORMATE_NITRITE_TP_1"/>
    <property type="match status" value="1"/>
</dbReference>
<dbReference type="PROSITE" id="PS01006">
    <property type="entry name" value="FORMATE_NITRITE_TP_2"/>
    <property type="match status" value="1"/>
</dbReference>
<keyword id="KW-0997">Cell inner membrane</keyword>
<keyword id="KW-1003">Cell membrane</keyword>
<keyword id="KW-0472">Membrane</keyword>
<keyword id="KW-0534">Nitrate assimilation</keyword>
<keyword id="KW-1185">Reference proteome</keyword>
<keyword id="KW-0812">Transmembrane</keyword>
<keyword id="KW-1133">Transmembrane helix</keyword>
<keyword id="KW-0813">Transport</keyword>
<reference key="1">
    <citation type="journal article" date="2002" name="Nucleic Acids Res.">
        <title>Genome sequence of Shigella flexneri 2a: insights into pathogenicity through comparison with genomes of Escherichia coli K12 and O157.</title>
        <authorList>
            <person name="Jin Q."/>
            <person name="Yuan Z."/>
            <person name="Xu J."/>
            <person name="Wang Y."/>
            <person name="Shen Y."/>
            <person name="Lu W."/>
            <person name="Wang J."/>
            <person name="Liu H."/>
            <person name="Yang J."/>
            <person name="Yang F."/>
            <person name="Zhang X."/>
            <person name="Zhang J."/>
            <person name="Yang G."/>
            <person name="Wu H."/>
            <person name="Qu D."/>
            <person name="Dong J."/>
            <person name="Sun L."/>
            <person name="Xue Y."/>
            <person name="Zhao A."/>
            <person name="Gao Y."/>
            <person name="Zhu J."/>
            <person name="Kan B."/>
            <person name="Ding K."/>
            <person name="Chen S."/>
            <person name="Cheng H."/>
            <person name="Yao Z."/>
            <person name="He B."/>
            <person name="Chen R."/>
            <person name="Ma D."/>
            <person name="Qiang B."/>
            <person name="Wen Y."/>
            <person name="Hou Y."/>
            <person name="Yu J."/>
        </authorList>
    </citation>
    <scope>NUCLEOTIDE SEQUENCE [LARGE SCALE GENOMIC DNA]</scope>
    <source>
        <strain>301 / Serotype 2a</strain>
    </source>
</reference>
<reference key="2">
    <citation type="journal article" date="2003" name="Infect. Immun.">
        <title>Complete genome sequence and comparative genomics of Shigella flexneri serotype 2a strain 2457T.</title>
        <authorList>
            <person name="Wei J."/>
            <person name="Goldberg M.B."/>
            <person name="Burland V."/>
            <person name="Venkatesan M.M."/>
            <person name="Deng W."/>
            <person name="Fournier G."/>
            <person name="Mayhew G.F."/>
            <person name="Plunkett G. III"/>
            <person name="Rose D.J."/>
            <person name="Darling A."/>
            <person name="Mau B."/>
            <person name="Perna N.T."/>
            <person name="Payne S.M."/>
            <person name="Runyen-Janecky L.J."/>
            <person name="Zhou S."/>
            <person name="Schwartz D.C."/>
            <person name="Blattner F.R."/>
        </authorList>
    </citation>
    <scope>NUCLEOTIDE SEQUENCE [LARGE SCALE GENOMIC DNA]</scope>
    <source>
        <strain>ATCC 700930 / 2457T / Serotype 2a</strain>
    </source>
</reference>